<protein>
    <recommendedName>
        <fullName evidence="1">Threonine--tRNA ligase</fullName>
        <ecNumber evidence="1">6.1.1.3</ecNumber>
    </recommendedName>
    <alternativeName>
        <fullName evidence="1">Threonyl-tRNA synthetase</fullName>
        <shortName evidence="1">ThrRS</shortName>
    </alternativeName>
</protein>
<keyword id="KW-0030">Aminoacyl-tRNA synthetase</keyword>
<keyword id="KW-0067">ATP-binding</keyword>
<keyword id="KW-0963">Cytoplasm</keyword>
<keyword id="KW-0436">Ligase</keyword>
<keyword id="KW-0479">Metal-binding</keyword>
<keyword id="KW-0547">Nucleotide-binding</keyword>
<keyword id="KW-0648">Protein biosynthesis</keyword>
<keyword id="KW-0694">RNA-binding</keyword>
<keyword id="KW-0820">tRNA-binding</keyword>
<keyword id="KW-0862">Zinc</keyword>
<organism>
    <name type="scientific">Streptococcus agalactiae serotype III (strain NEM316)</name>
    <dbReference type="NCBI Taxonomy" id="211110"/>
    <lineage>
        <taxon>Bacteria</taxon>
        <taxon>Bacillati</taxon>
        <taxon>Bacillota</taxon>
        <taxon>Bacilli</taxon>
        <taxon>Lactobacillales</taxon>
        <taxon>Streptococcaceae</taxon>
        <taxon>Streptococcus</taxon>
    </lineage>
</organism>
<comment type="function">
    <text evidence="1">Catalyzes the attachment of threonine to tRNA(Thr) in a two-step reaction: L-threonine is first activated by ATP to form Thr-AMP and then transferred to the acceptor end of tRNA(Thr). Also edits incorrectly charged L-seryl-tRNA(Thr).</text>
</comment>
<comment type="catalytic activity">
    <reaction evidence="1">
        <text>tRNA(Thr) + L-threonine + ATP = L-threonyl-tRNA(Thr) + AMP + diphosphate + H(+)</text>
        <dbReference type="Rhea" id="RHEA:24624"/>
        <dbReference type="Rhea" id="RHEA-COMP:9670"/>
        <dbReference type="Rhea" id="RHEA-COMP:9704"/>
        <dbReference type="ChEBI" id="CHEBI:15378"/>
        <dbReference type="ChEBI" id="CHEBI:30616"/>
        <dbReference type="ChEBI" id="CHEBI:33019"/>
        <dbReference type="ChEBI" id="CHEBI:57926"/>
        <dbReference type="ChEBI" id="CHEBI:78442"/>
        <dbReference type="ChEBI" id="CHEBI:78534"/>
        <dbReference type="ChEBI" id="CHEBI:456215"/>
        <dbReference type="EC" id="6.1.1.3"/>
    </reaction>
</comment>
<comment type="cofactor">
    <cofactor evidence="1">
        <name>Zn(2+)</name>
        <dbReference type="ChEBI" id="CHEBI:29105"/>
    </cofactor>
    <text evidence="1">Binds 1 zinc ion per subunit.</text>
</comment>
<comment type="subunit">
    <text evidence="1">Homodimer.</text>
</comment>
<comment type="subcellular location">
    <subcellularLocation>
        <location evidence="1">Cytoplasm</location>
    </subcellularLocation>
</comment>
<comment type="similarity">
    <text evidence="1">Belongs to the class-II aminoacyl-tRNA synthetase family.</text>
</comment>
<reference key="1">
    <citation type="journal article" date="2002" name="Mol. Microbiol.">
        <title>Genome sequence of Streptococcus agalactiae, a pathogen causing invasive neonatal disease.</title>
        <authorList>
            <person name="Glaser P."/>
            <person name="Rusniok C."/>
            <person name="Buchrieser C."/>
            <person name="Chevalier F."/>
            <person name="Frangeul L."/>
            <person name="Msadek T."/>
            <person name="Zouine M."/>
            <person name="Couve E."/>
            <person name="Lalioui L."/>
            <person name="Poyart C."/>
            <person name="Trieu-Cuot P."/>
            <person name="Kunst F."/>
        </authorList>
    </citation>
    <scope>NUCLEOTIDE SEQUENCE [LARGE SCALE GENOMIC DNA]</scope>
    <source>
        <strain>NEM316</strain>
    </source>
</reference>
<gene>
    <name evidence="1" type="primary">thrS</name>
    <name type="ordered locus">gbs0684</name>
</gene>
<sequence>MIKITFPDGAIREFESGITTFEIAQSISNSLAKKALAGKFNGQLIDTTRAIEEDGSIEIVTPDHEDALGVLRHSAAHLFAQAAKRLFPDLCLGVGPAIQDGFYYDTDNKSGQISNDDLPRVEEEMKKIVKENHPCIREEISKEEALELFKDDPYKVELISEHAEDGLTVYRQGEFVDLCRGPHVPSTGRIQVFHLLNVAGAYWRGNSDNAMMQRVYGTAWFDKKDLKAYLKRREEAKERDHRKLGKELDLFMVNPEVGQGLPFWLPNGATIRRELERYIVDKEIASGYQHVYTPPMASVEFYKTSGHWDHYREDMFPTMDMGDGEEFVLRPMNCPHHIEVYKHHVHSYRELPIRIAELGMMHRYEKSGALTGLQRVREMTLNDAHIFVTPEQIKDEFLKALNLIAEIYEDFNLTDYRFRLSYRDPEDKHKYYDNDEMWENAQAMLKEAMDDFGLDYFEAEGEAAFYGPKLDIQVKTALGNEETLSTIQLDFLLPERFDLKYIGADGEEHRPIMIHRGGISTMERFTAILIETYKGAFPTWLAPQQVSVIPISNEAHIDYAWEVARVLKDRGIRAEVDDRNEKMQYKIRAAQTQKIPYQLIVGDKEMEEKAVNVRRYGSKATETKSIEEFVESILADIARKSRPDEVK</sequence>
<dbReference type="EC" id="6.1.1.3" evidence="1"/>
<dbReference type="EMBL" id="AL766846">
    <property type="protein sequence ID" value="CAD46328.1"/>
    <property type="molecule type" value="Genomic_DNA"/>
</dbReference>
<dbReference type="RefSeq" id="WP_000591018.1">
    <property type="nucleotide sequence ID" value="NC_004368.1"/>
</dbReference>
<dbReference type="SMR" id="Q8E693"/>
<dbReference type="KEGG" id="san:thrS"/>
<dbReference type="eggNOG" id="COG0441">
    <property type="taxonomic scope" value="Bacteria"/>
</dbReference>
<dbReference type="HOGENOM" id="CLU_008554_3_2_9"/>
<dbReference type="Proteomes" id="UP000000823">
    <property type="component" value="Chromosome"/>
</dbReference>
<dbReference type="GO" id="GO:0005737">
    <property type="term" value="C:cytoplasm"/>
    <property type="evidence" value="ECO:0007669"/>
    <property type="project" value="UniProtKB-SubCell"/>
</dbReference>
<dbReference type="GO" id="GO:0005524">
    <property type="term" value="F:ATP binding"/>
    <property type="evidence" value="ECO:0007669"/>
    <property type="project" value="UniProtKB-UniRule"/>
</dbReference>
<dbReference type="GO" id="GO:0140096">
    <property type="term" value="F:catalytic activity, acting on a protein"/>
    <property type="evidence" value="ECO:0007669"/>
    <property type="project" value="UniProtKB-ARBA"/>
</dbReference>
<dbReference type="GO" id="GO:0046872">
    <property type="term" value="F:metal ion binding"/>
    <property type="evidence" value="ECO:0007669"/>
    <property type="project" value="UniProtKB-KW"/>
</dbReference>
<dbReference type="GO" id="GO:0004829">
    <property type="term" value="F:threonine-tRNA ligase activity"/>
    <property type="evidence" value="ECO:0007669"/>
    <property type="project" value="UniProtKB-UniRule"/>
</dbReference>
<dbReference type="GO" id="GO:0016740">
    <property type="term" value="F:transferase activity"/>
    <property type="evidence" value="ECO:0007669"/>
    <property type="project" value="UniProtKB-ARBA"/>
</dbReference>
<dbReference type="GO" id="GO:0000049">
    <property type="term" value="F:tRNA binding"/>
    <property type="evidence" value="ECO:0007669"/>
    <property type="project" value="UniProtKB-KW"/>
</dbReference>
<dbReference type="GO" id="GO:0006435">
    <property type="term" value="P:threonyl-tRNA aminoacylation"/>
    <property type="evidence" value="ECO:0007669"/>
    <property type="project" value="UniProtKB-UniRule"/>
</dbReference>
<dbReference type="CDD" id="cd01667">
    <property type="entry name" value="TGS_ThrRS"/>
    <property type="match status" value="1"/>
</dbReference>
<dbReference type="CDD" id="cd00860">
    <property type="entry name" value="ThrRS_anticodon"/>
    <property type="match status" value="1"/>
</dbReference>
<dbReference type="CDD" id="cd00771">
    <property type="entry name" value="ThrRS_core"/>
    <property type="match status" value="1"/>
</dbReference>
<dbReference type="FunFam" id="3.10.20.30:FF:000005">
    <property type="entry name" value="Threonine--tRNA ligase"/>
    <property type="match status" value="1"/>
</dbReference>
<dbReference type="FunFam" id="3.30.54.20:FF:000002">
    <property type="entry name" value="Threonine--tRNA ligase"/>
    <property type="match status" value="1"/>
</dbReference>
<dbReference type="FunFam" id="3.30.930.10:FF:000002">
    <property type="entry name" value="Threonine--tRNA ligase"/>
    <property type="match status" value="1"/>
</dbReference>
<dbReference type="FunFam" id="3.40.50.800:FF:000001">
    <property type="entry name" value="Threonine--tRNA ligase"/>
    <property type="match status" value="1"/>
</dbReference>
<dbReference type="FunFam" id="3.30.980.10:FF:000005">
    <property type="entry name" value="Threonyl-tRNA synthetase, mitochondrial"/>
    <property type="match status" value="1"/>
</dbReference>
<dbReference type="Gene3D" id="3.10.20.30">
    <property type="match status" value="1"/>
</dbReference>
<dbReference type="Gene3D" id="3.30.54.20">
    <property type="match status" value="1"/>
</dbReference>
<dbReference type="Gene3D" id="3.40.50.800">
    <property type="entry name" value="Anticodon-binding domain"/>
    <property type="match status" value="1"/>
</dbReference>
<dbReference type="Gene3D" id="3.30.930.10">
    <property type="entry name" value="Bira Bifunctional Protein, Domain 2"/>
    <property type="match status" value="1"/>
</dbReference>
<dbReference type="Gene3D" id="3.30.980.10">
    <property type="entry name" value="Threonyl-trna Synthetase, Chain A, domain 2"/>
    <property type="match status" value="1"/>
</dbReference>
<dbReference type="HAMAP" id="MF_00184">
    <property type="entry name" value="Thr_tRNA_synth"/>
    <property type="match status" value="1"/>
</dbReference>
<dbReference type="InterPro" id="IPR002314">
    <property type="entry name" value="aa-tRNA-synt_IIb"/>
</dbReference>
<dbReference type="InterPro" id="IPR006195">
    <property type="entry name" value="aa-tRNA-synth_II"/>
</dbReference>
<dbReference type="InterPro" id="IPR045864">
    <property type="entry name" value="aa-tRNA-synth_II/BPL/LPL"/>
</dbReference>
<dbReference type="InterPro" id="IPR004154">
    <property type="entry name" value="Anticodon-bd"/>
</dbReference>
<dbReference type="InterPro" id="IPR036621">
    <property type="entry name" value="Anticodon-bd_dom_sf"/>
</dbReference>
<dbReference type="InterPro" id="IPR012675">
    <property type="entry name" value="Beta-grasp_dom_sf"/>
</dbReference>
<dbReference type="InterPro" id="IPR004095">
    <property type="entry name" value="TGS"/>
</dbReference>
<dbReference type="InterPro" id="IPR012676">
    <property type="entry name" value="TGS-like"/>
</dbReference>
<dbReference type="InterPro" id="IPR002320">
    <property type="entry name" value="Thr-tRNA-ligase_IIa"/>
</dbReference>
<dbReference type="InterPro" id="IPR018163">
    <property type="entry name" value="Thr/Ala-tRNA-synth_IIc_edit"/>
</dbReference>
<dbReference type="InterPro" id="IPR047246">
    <property type="entry name" value="ThrRS_anticodon"/>
</dbReference>
<dbReference type="InterPro" id="IPR033728">
    <property type="entry name" value="ThrRS_core"/>
</dbReference>
<dbReference type="InterPro" id="IPR012947">
    <property type="entry name" value="tRNA_SAD"/>
</dbReference>
<dbReference type="NCBIfam" id="TIGR00418">
    <property type="entry name" value="thrS"/>
    <property type="match status" value="1"/>
</dbReference>
<dbReference type="PANTHER" id="PTHR11451:SF56">
    <property type="entry name" value="THREONINE--TRNA LIGASE 1"/>
    <property type="match status" value="1"/>
</dbReference>
<dbReference type="PANTHER" id="PTHR11451">
    <property type="entry name" value="THREONINE-TRNA LIGASE"/>
    <property type="match status" value="1"/>
</dbReference>
<dbReference type="Pfam" id="PF03129">
    <property type="entry name" value="HGTP_anticodon"/>
    <property type="match status" value="1"/>
</dbReference>
<dbReference type="Pfam" id="PF02824">
    <property type="entry name" value="TGS"/>
    <property type="match status" value="1"/>
</dbReference>
<dbReference type="Pfam" id="PF00587">
    <property type="entry name" value="tRNA-synt_2b"/>
    <property type="match status" value="1"/>
</dbReference>
<dbReference type="Pfam" id="PF07973">
    <property type="entry name" value="tRNA_SAD"/>
    <property type="match status" value="1"/>
</dbReference>
<dbReference type="PRINTS" id="PR01047">
    <property type="entry name" value="TRNASYNTHTHR"/>
</dbReference>
<dbReference type="SMART" id="SM00863">
    <property type="entry name" value="tRNA_SAD"/>
    <property type="match status" value="1"/>
</dbReference>
<dbReference type="SUPFAM" id="SSF52954">
    <property type="entry name" value="Class II aaRS ABD-related"/>
    <property type="match status" value="1"/>
</dbReference>
<dbReference type="SUPFAM" id="SSF55681">
    <property type="entry name" value="Class II aaRS and biotin synthetases"/>
    <property type="match status" value="1"/>
</dbReference>
<dbReference type="SUPFAM" id="SSF81271">
    <property type="entry name" value="TGS-like"/>
    <property type="match status" value="1"/>
</dbReference>
<dbReference type="SUPFAM" id="SSF55186">
    <property type="entry name" value="ThrRS/AlaRS common domain"/>
    <property type="match status" value="1"/>
</dbReference>
<dbReference type="PROSITE" id="PS50862">
    <property type="entry name" value="AA_TRNA_LIGASE_II"/>
    <property type="match status" value="1"/>
</dbReference>
<dbReference type="PROSITE" id="PS51880">
    <property type="entry name" value="TGS"/>
    <property type="match status" value="1"/>
</dbReference>
<name>SYT_STRA3</name>
<accession>Q8E693</accession>
<feature type="chain" id="PRO_0000101055" description="Threonine--tRNA ligase">
    <location>
        <begin position="1"/>
        <end position="647"/>
    </location>
</feature>
<feature type="domain" description="TGS" evidence="2">
    <location>
        <begin position="1"/>
        <end position="61"/>
    </location>
</feature>
<feature type="region of interest" description="Catalytic" evidence="1">
    <location>
        <begin position="240"/>
        <end position="538"/>
    </location>
</feature>
<feature type="binding site" evidence="1">
    <location>
        <position position="334"/>
    </location>
    <ligand>
        <name>Zn(2+)</name>
        <dbReference type="ChEBI" id="CHEBI:29105"/>
    </ligand>
</feature>
<feature type="binding site" evidence="1">
    <location>
        <position position="385"/>
    </location>
    <ligand>
        <name>Zn(2+)</name>
        <dbReference type="ChEBI" id="CHEBI:29105"/>
    </ligand>
</feature>
<feature type="binding site" evidence="1">
    <location>
        <position position="515"/>
    </location>
    <ligand>
        <name>Zn(2+)</name>
        <dbReference type="ChEBI" id="CHEBI:29105"/>
    </ligand>
</feature>
<evidence type="ECO:0000255" key="1">
    <source>
        <dbReference type="HAMAP-Rule" id="MF_00184"/>
    </source>
</evidence>
<evidence type="ECO:0000255" key="2">
    <source>
        <dbReference type="PROSITE-ProRule" id="PRU01228"/>
    </source>
</evidence>
<proteinExistence type="inferred from homology"/>